<evidence type="ECO:0000255" key="1">
    <source>
        <dbReference type="HAMAP-Rule" id="MF_00104"/>
    </source>
</evidence>
<gene>
    <name evidence="1" type="primary">rnc</name>
    <name type="ordered locus">Daro_2029</name>
</gene>
<keyword id="KW-0963">Cytoplasm</keyword>
<keyword id="KW-0255">Endonuclease</keyword>
<keyword id="KW-0378">Hydrolase</keyword>
<keyword id="KW-0460">Magnesium</keyword>
<keyword id="KW-0479">Metal-binding</keyword>
<keyword id="KW-0507">mRNA processing</keyword>
<keyword id="KW-0540">Nuclease</keyword>
<keyword id="KW-0694">RNA-binding</keyword>
<keyword id="KW-0698">rRNA processing</keyword>
<keyword id="KW-0699">rRNA-binding</keyword>
<keyword id="KW-0819">tRNA processing</keyword>
<dbReference type="EC" id="3.1.26.3" evidence="1"/>
<dbReference type="EMBL" id="CP000089">
    <property type="protein sequence ID" value="AAZ46774.1"/>
    <property type="molecule type" value="Genomic_DNA"/>
</dbReference>
<dbReference type="SMR" id="Q47EF7"/>
<dbReference type="STRING" id="159087.Daro_2029"/>
<dbReference type="KEGG" id="dar:Daro_2029"/>
<dbReference type="eggNOG" id="COG0571">
    <property type="taxonomic scope" value="Bacteria"/>
</dbReference>
<dbReference type="HOGENOM" id="CLU_000907_1_1_4"/>
<dbReference type="OrthoDB" id="9805026at2"/>
<dbReference type="GO" id="GO:0005737">
    <property type="term" value="C:cytoplasm"/>
    <property type="evidence" value="ECO:0007669"/>
    <property type="project" value="UniProtKB-SubCell"/>
</dbReference>
<dbReference type="GO" id="GO:0003725">
    <property type="term" value="F:double-stranded RNA binding"/>
    <property type="evidence" value="ECO:0007669"/>
    <property type="project" value="TreeGrafter"/>
</dbReference>
<dbReference type="GO" id="GO:0046872">
    <property type="term" value="F:metal ion binding"/>
    <property type="evidence" value="ECO:0007669"/>
    <property type="project" value="UniProtKB-KW"/>
</dbReference>
<dbReference type="GO" id="GO:0004525">
    <property type="term" value="F:ribonuclease III activity"/>
    <property type="evidence" value="ECO:0007669"/>
    <property type="project" value="UniProtKB-UniRule"/>
</dbReference>
<dbReference type="GO" id="GO:0019843">
    <property type="term" value="F:rRNA binding"/>
    <property type="evidence" value="ECO:0007669"/>
    <property type="project" value="UniProtKB-KW"/>
</dbReference>
<dbReference type="GO" id="GO:0006397">
    <property type="term" value="P:mRNA processing"/>
    <property type="evidence" value="ECO:0007669"/>
    <property type="project" value="UniProtKB-UniRule"/>
</dbReference>
<dbReference type="GO" id="GO:0010468">
    <property type="term" value="P:regulation of gene expression"/>
    <property type="evidence" value="ECO:0007669"/>
    <property type="project" value="TreeGrafter"/>
</dbReference>
<dbReference type="GO" id="GO:0006364">
    <property type="term" value="P:rRNA processing"/>
    <property type="evidence" value="ECO:0007669"/>
    <property type="project" value="UniProtKB-UniRule"/>
</dbReference>
<dbReference type="GO" id="GO:0008033">
    <property type="term" value="P:tRNA processing"/>
    <property type="evidence" value="ECO:0007669"/>
    <property type="project" value="UniProtKB-KW"/>
</dbReference>
<dbReference type="CDD" id="cd10845">
    <property type="entry name" value="DSRM_RNAse_III_family"/>
    <property type="match status" value="1"/>
</dbReference>
<dbReference type="CDD" id="cd00593">
    <property type="entry name" value="RIBOc"/>
    <property type="match status" value="1"/>
</dbReference>
<dbReference type="FunFam" id="1.10.1520.10:FF:000001">
    <property type="entry name" value="Ribonuclease 3"/>
    <property type="match status" value="1"/>
</dbReference>
<dbReference type="FunFam" id="3.30.160.20:FF:000003">
    <property type="entry name" value="Ribonuclease 3"/>
    <property type="match status" value="1"/>
</dbReference>
<dbReference type="Gene3D" id="3.30.160.20">
    <property type="match status" value="1"/>
</dbReference>
<dbReference type="Gene3D" id="1.10.1520.10">
    <property type="entry name" value="Ribonuclease III domain"/>
    <property type="match status" value="1"/>
</dbReference>
<dbReference type="HAMAP" id="MF_00104">
    <property type="entry name" value="RNase_III"/>
    <property type="match status" value="1"/>
</dbReference>
<dbReference type="InterPro" id="IPR014720">
    <property type="entry name" value="dsRBD_dom"/>
</dbReference>
<dbReference type="InterPro" id="IPR011907">
    <property type="entry name" value="RNase_III"/>
</dbReference>
<dbReference type="InterPro" id="IPR000999">
    <property type="entry name" value="RNase_III_dom"/>
</dbReference>
<dbReference type="InterPro" id="IPR036389">
    <property type="entry name" value="RNase_III_sf"/>
</dbReference>
<dbReference type="NCBIfam" id="TIGR02191">
    <property type="entry name" value="RNaseIII"/>
    <property type="match status" value="1"/>
</dbReference>
<dbReference type="PANTHER" id="PTHR11207:SF0">
    <property type="entry name" value="RIBONUCLEASE 3"/>
    <property type="match status" value="1"/>
</dbReference>
<dbReference type="PANTHER" id="PTHR11207">
    <property type="entry name" value="RIBONUCLEASE III"/>
    <property type="match status" value="1"/>
</dbReference>
<dbReference type="Pfam" id="PF00035">
    <property type="entry name" value="dsrm"/>
    <property type="match status" value="1"/>
</dbReference>
<dbReference type="Pfam" id="PF14622">
    <property type="entry name" value="Ribonucleas_3_3"/>
    <property type="match status" value="1"/>
</dbReference>
<dbReference type="SMART" id="SM00358">
    <property type="entry name" value="DSRM"/>
    <property type="match status" value="1"/>
</dbReference>
<dbReference type="SMART" id="SM00535">
    <property type="entry name" value="RIBOc"/>
    <property type="match status" value="1"/>
</dbReference>
<dbReference type="SUPFAM" id="SSF54768">
    <property type="entry name" value="dsRNA-binding domain-like"/>
    <property type="match status" value="1"/>
</dbReference>
<dbReference type="SUPFAM" id="SSF69065">
    <property type="entry name" value="RNase III domain-like"/>
    <property type="match status" value="1"/>
</dbReference>
<dbReference type="PROSITE" id="PS50137">
    <property type="entry name" value="DS_RBD"/>
    <property type="match status" value="1"/>
</dbReference>
<dbReference type="PROSITE" id="PS00517">
    <property type="entry name" value="RNASE_3_1"/>
    <property type="match status" value="1"/>
</dbReference>
<dbReference type="PROSITE" id="PS50142">
    <property type="entry name" value="RNASE_3_2"/>
    <property type="match status" value="1"/>
</dbReference>
<proteinExistence type="inferred from homology"/>
<accession>Q47EF7</accession>
<comment type="function">
    <text evidence="1">Digests double-stranded RNA. Involved in the processing of primary rRNA transcript to yield the immediate precursors to the large and small rRNAs (23S and 16S). Processes some mRNAs, and tRNAs when they are encoded in the rRNA operon. Processes pre-crRNA and tracrRNA of type II CRISPR loci if present in the organism.</text>
</comment>
<comment type="catalytic activity">
    <reaction evidence="1">
        <text>Endonucleolytic cleavage to 5'-phosphomonoester.</text>
        <dbReference type="EC" id="3.1.26.3"/>
    </reaction>
</comment>
<comment type="cofactor">
    <cofactor evidence="1">
        <name>Mg(2+)</name>
        <dbReference type="ChEBI" id="CHEBI:18420"/>
    </cofactor>
</comment>
<comment type="subunit">
    <text evidence="1">Homodimer.</text>
</comment>
<comment type="subcellular location">
    <subcellularLocation>
        <location evidence="1">Cytoplasm</location>
    </subcellularLocation>
</comment>
<comment type="similarity">
    <text evidence="1">Belongs to the ribonuclease III family.</text>
</comment>
<feature type="chain" id="PRO_0000228521" description="Ribonuclease 3">
    <location>
        <begin position="1"/>
        <end position="222"/>
    </location>
</feature>
<feature type="domain" description="RNase III" evidence="1">
    <location>
        <begin position="3"/>
        <end position="125"/>
    </location>
</feature>
<feature type="domain" description="DRBM" evidence="1">
    <location>
        <begin position="152"/>
        <end position="222"/>
    </location>
</feature>
<feature type="active site" evidence="1">
    <location>
        <position position="42"/>
    </location>
</feature>
<feature type="active site" evidence="1">
    <location>
        <position position="114"/>
    </location>
</feature>
<feature type="binding site" evidence="1">
    <location>
        <position position="38"/>
    </location>
    <ligand>
        <name>Mg(2+)</name>
        <dbReference type="ChEBI" id="CHEBI:18420"/>
    </ligand>
</feature>
<feature type="binding site" evidence="1">
    <location>
        <position position="111"/>
    </location>
    <ligand>
        <name>Mg(2+)</name>
        <dbReference type="ChEBI" id="CHEBI:18420"/>
    </ligand>
</feature>
<feature type="binding site" evidence="1">
    <location>
        <position position="114"/>
    </location>
    <ligand>
        <name>Mg(2+)</name>
        <dbReference type="ChEBI" id="CHEBI:18420"/>
    </ligand>
</feature>
<protein>
    <recommendedName>
        <fullName evidence="1">Ribonuclease 3</fullName>
        <ecNumber evidence="1">3.1.26.3</ecNumber>
    </recommendedName>
    <alternativeName>
        <fullName evidence="1">Ribonuclease III</fullName>
        <shortName evidence="1">RNase III</shortName>
    </alternativeName>
</protein>
<reference key="1">
    <citation type="journal article" date="2009" name="BMC Genomics">
        <title>Metabolic analysis of the soil microbe Dechloromonas aromatica str. RCB: indications of a surprisingly complex life-style and cryptic anaerobic pathways for aromatic degradation.</title>
        <authorList>
            <person name="Salinero K.K."/>
            <person name="Keller K."/>
            <person name="Feil W.S."/>
            <person name="Feil H."/>
            <person name="Trong S."/>
            <person name="Di Bartolo G."/>
            <person name="Lapidus A."/>
        </authorList>
    </citation>
    <scope>NUCLEOTIDE SEQUENCE [LARGE SCALE GENOMIC DNA]</scope>
    <source>
        <strain>RCB</strain>
    </source>
</reference>
<name>RNC_DECAR</name>
<organism>
    <name type="scientific">Dechloromonas aromatica (strain RCB)</name>
    <dbReference type="NCBI Taxonomy" id="159087"/>
    <lineage>
        <taxon>Bacteria</taxon>
        <taxon>Pseudomonadati</taxon>
        <taxon>Pseudomonadota</taxon>
        <taxon>Betaproteobacteria</taxon>
        <taxon>Rhodocyclales</taxon>
        <taxon>Azonexaceae</taxon>
        <taxon>Dechloromonas</taxon>
    </lineage>
</organism>
<sequence length="222" mass="24599">MTSQSVAKKLNHCFSDQALFRTALTHRSFGTPNNERLEFLGDGVLDFVIAASLYHRFPDLPEGDLSRLRANLVRQETLHRLALELNIGAFLRLGEGELKSGGAQRPSILADALEALFGAIYLDAGFEASRAVIEKLFAPLLDDLKPGQFQKDAKTRLQEWLQGRKKALPRYHLLEATGAAHEQRFEIACEIESPALRTVGHGSSRRIAEQVAAEKALKELLA</sequence>